<evidence type="ECO:0000250" key="1">
    <source>
        <dbReference type="UniProtKB" id="P41250"/>
    </source>
</evidence>
<evidence type="ECO:0000250" key="2">
    <source>
        <dbReference type="UniProtKB" id="Q9CZD3"/>
    </source>
</evidence>
<evidence type="ECO:0000255" key="3">
    <source>
        <dbReference type="PROSITE-ProRule" id="PRU00531"/>
    </source>
</evidence>
<evidence type="ECO:0000269" key="4">
    <source>
    </source>
</evidence>
<evidence type="ECO:0000303" key="5">
    <source>
    </source>
</evidence>
<evidence type="ECO:0000305" key="6"/>
<evidence type="ECO:0000312" key="7">
    <source>
        <dbReference type="WormBase" id="T10F2.1a"/>
    </source>
</evidence>
<proteinExistence type="evidence at protein level"/>
<keyword id="KW-0030">Aminoacyl-tRNA synthetase</keyword>
<keyword id="KW-0067">ATP-binding</keyword>
<keyword id="KW-0966">Cell projection</keyword>
<keyword id="KW-0963">Cytoplasm</keyword>
<keyword id="KW-0436">Ligase</keyword>
<keyword id="KW-0547">Nucleotide-binding</keyword>
<keyword id="KW-0648">Protein biosynthesis</keyword>
<keyword id="KW-1185">Reference proteome</keyword>
<keyword id="KW-0964">Secreted</keyword>
<keyword id="KW-0808">Transferase</keyword>
<reference key="1">
    <citation type="journal article" date="1998" name="Science">
        <title>Genome sequence of the nematode C. elegans: a platform for investigating biology.</title>
        <authorList>
            <consortium name="The C. elegans sequencing consortium"/>
        </authorList>
    </citation>
    <scope>NUCLEOTIDE SEQUENCE [LARGE SCALE GENOMIC DNA]</scope>
    <source>
        <strain>Bristol N2</strain>
    </source>
</reference>
<reference key="2">
    <citation type="journal article" date="2012" name="J. Proteomics">
        <title>Comparative proteomic analysis reveals differentially expressed proteins in Caenorhabditis elegans pgl-1 mutants grown at 20 degrees C and 25 degrees C.</title>
        <authorList>
            <person name="Tohsato Y."/>
            <person name="Monobe K."/>
            <person name="Suzuki K."/>
            <person name="Hayano T."/>
            <person name="Kawasaki I."/>
            <person name="Ito M."/>
        </authorList>
    </citation>
    <scope>IDENTIFICATION BY MASS SPECTROMETRY</scope>
    <scope>DISRUPTION PHENOTYPE</scope>
</reference>
<dbReference type="EC" id="6.1.1.14" evidence="1"/>
<dbReference type="EC" id="2.7.7.-" evidence="1"/>
<dbReference type="EMBL" id="FO081619">
    <property type="protein sequence ID" value="CCD72865.1"/>
    <property type="molecule type" value="Genomic_DNA"/>
</dbReference>
<dbReference type="RefSeq" id="NP_498093.1">
    <property type="nucleotide sequence ID" value="NM_065692.7"/>
</dbReference>
<dbReference type="SMR" id="Q10039"/>
<dbReference type="BioGRID" id="40934">
    <property type="interactions" value="11"/>
</dbReference>
<dbReference type="FunCoup" id="Q10039">
    <property type="interactions" value="2756"/>
</dbReference>
<dbReference type="IntAct" id="Q10039">
    <property type="interactions" value="1"/>
</dbReference>
<dbReference type="STRING" id="6239.T10F2.1a.1"/>
<dbReference type="PaxDb" id="6239-T10F2.1a"/>
<dbReference type="PeptideAtlas" id="Q10039"/>
<dbReference type="EnsemblMetazoa" id="T10F2.1a.1">
    <property type="protein sequence ID" value="T10F2.1a.1"/>
    <property type="gene ID" value="WBGene00001744"/>
</dbReference>
<dbReference type="GeneID" id="175703"/>
<dbReference type="KEGG" id="cel:CELE_T10F2.1"/>
<dbReference type="UCSC" id="T10F2.1b.1">
    <property type="organism name" value="c. elegans"/>
</dbReference>
<dbReference type="AGR" id="WB:WBGene00001744"/>
<dbReference type="CTD" id="175703"/>
<dbReference type="WormBase" id="T10F2.1a">
    <property type="protein sequence ID" value="CE29472"/>
    <property type="gene ID" value="WBGene00001744"/>
    <property type="gene designation" value="gars-1"/>
</dbReference>
<dbReference type="eggNOG" id="KOG2298">
    <property type="taxonomic scope" value="Eukaryota"/>
</dbReference>
<dbReference type="InParanoid" id="Q10039"/>
<dbReference type="OMA" id="MEMQYFV"/>
<dbReference type="OrthoDB" id="57698at2759"/>
<dbReference type="PhylomeDB" id="Q10039"/>
<dbReference type="SignaLink" id="Q10039"/>
<dbReference type="PRO" id="PR:Q10039"/>
<dbReference type="Proteomes" id="UP000001940">
    <property type="component" value="Chromosome III"/>
</dbReference>
<dbReference type="ExpressionAtlas" id="Q10039">
    <property type="expression patterns" value="baseline and differential"/>
</dbReference>
<dbReference type="GO" id="GO:0030424">
    <property type="term" value="C:axon"/>
    <property type="evidence" value="ECO:0007669"/>
    <property type="project" value="UniProtKB-SubCell"/>
</dbReference>
<dbReference type="GO" id="GO:0005737">
    <property type="term" value="C:cytoplasm"/>
    <property type="evidence" value="ECO:0000318"/>
    <property type="project" value="GO_Central"/>
</dbReference>
<dbReference type="GO" id="GO:0005576">
    <property type="term" value="C:extracellular region"/>
    <property type="evidence" value="ECO:0007669"/>
    <property type="project" value="UniProtKB-SubCell"/>
</dbReference>
<dbReference type="GO" id="GO:0005739">
    <property type="term" value="C:mitochondrion"/>
    <property type="evidence" value="ECO:0000318"/>
    <property type="project" value="GO_Central"/>
</dbReference>
<dbReference type="GO" id="GO:0005524">
    <property type="term" value="F:ATP binding"/>
    <property type="evidence" value="ECO:0007669"/>
    <property type="project" value="UniProtKB-KW"/>
</dbReference>
<dbReference type="GO" id="GO:0141192">
    <property type="term" value="F:ATP:ATP adenylyltransferase activity"/>
    <property type="evidence" value="ECO:0007669"/>
    <property type="project" value="RHEA"/>
</dbReference>
<dbReference type="GO" id="GO:0004820">
    <property type="term" value="F:glycine-tRNA ligase activity"/>
    <property type="evidence" value="ECO:0000250"/>
    <property type="project" value="UniProtKB"/>
</dbReference>
<dbReference type="GO" id="GO:0046983">
    <property type="term" value="F:protein dimerization activity"/>
    <property type="evidence" value="ECO:0000250"/>
    <property type="project" value="UniProtKB"/>
</dbReference>
<dbReference type="GO" id="GO:0015966">
    <property type="term" value="P:diadenosine tetraphosphate biosynthetic process"/>
    <property type="evidence" value="ECO:0000250"/>
    <property type="project" value="UniProtKB"/>
</dbReference>
<dbReference type="GO" id="GO:0070150">
    <property type="term" value="P:mitochondrial glycyl-tRNA aminoacylation"/>
    <property type="evidence" value="ECO:0000318"/>
    <property type="project" value="GO_Central"/>
</dbReference>
<dbReference type="CDD" id="cd00774">
    <property type="entry name" value="GlyRS-like_core"/>
    <property type="match status" value="1"/>
</dbReference>
<dbReference type="CDD" id="cd00858">
    <property type="entry name" value="GlyRS_anticodon"/>
    <property type="match status" value="1"/>
</dbReference>
<dbReference type="CDD" id="cd00935">
    <property type="entry name" value="GlyRS_RNA"/>
    <property type="match status" value="1"/>
</dbReference>
<dbReference type="FunFam" id="1.10.287.10:FF:000022">
    <property type="entry name" value="Glycine--tRNA ligase"/>
    <property type="match status" value="1"/>
</dbReference>
<dbReference type="FunFam" id="3.30.40.230:FF:000001">
    <property type="entry name" value="Glycine--tRNA ligase"/>
    <property type="match status" value="1"/>
</dbReference>
<dbReference type="FunFam" id="3.30.720.200:FF:000001">
    <property type="entry name" value="Glycine--tRNA ligase 2"/>
    <property type="match status" value="1"/>
</dbReference>
<dbReference type="FunFam" id="3.40.50.800:FF:000004">
    <property type="entry name" value="Glycine--tRNA ligase 2"/>
    <property type="match status" value="1"/>
</dbReference>
<dbReference type="FunFam" id="3.30.930.10:FF:000158">
    <property type="entry name" value="Glycyl-tRNA synthetase"/>
    <property type="match status" value="1"/>
</dbReference>
<dbReference type="FunFam" id="3.30.930.10:FF:000010">
    <property type="entry name" value="Glycyl-tRNA synthetase 1"/>
    <property type="match status" value="1"/>
</dbReference>
<dbReference type="Gene3D" id="3.30.40.230">
    <property type="match status" value="1"/>
</dbReference>
<dbReference type="Gene3D" id="3.30.720.200">
    <property type="match status" value="1"/>
</dbReference>
<dbReference type="Gene3D" id="3.40.50.800">
    <property type="entry name" value="Anticodon-binding domain"/>
    <property type="match status" value="1"/>
</dbReference>
<dbReference type="Gene3D" id="3.30.930.10">
    <property type="entry name" value="Bira Bifunctional Protein, Domain 2"/>
    <property type="match status" value="1"/>
</dbReference>
<dbReference type="Gene3D" id="1.10.287.10">
    <property type="entry name" value="S15/NS1, RNA-binding"/>
    <property type="match status" value="1"/>
</dbReference>
<dbReference type="InterPro" id="IPR002314">
    <property type="entry name" value="aa-tRNA-synt_IIb"/>
</dbReference>
<dbReference type="InterPro" id="IPR006195">
    <property type="entry name" value="aa-tRNA-synth_II"/>
</dbReference>
<dbReference type="InterPro" id="IPR045864">
    <property type="entry name" value="aa-tRNA-synth_II/BPL/LPL"/>
</dbReference>
<dbReference type="InterPro" id="IPR004154">
    <property type="entry name" value="Anticodon-bd"/>
</dbReference>
<dbReference type="InterPro" id="IPR036621">
    <property type="entry name" value="Anticodon-bd_dom_sf"/>
</dbReference>
<dbReference type="InterPro" id="IPR027031">
    <property type="entry name" value="Gly-tRNA_synthase/POLG2"/>
</dbReference>
<dbReference type="InterPro" id="IPR033731">
    <property type="entry name" value="GlyRS-like_core"/>
</dbReference>
<dbReference type="InterPro" id="IPR002315">
    <property type="entry name" value="tRNA-synt_gly"/>
</dbReference>
<dbReference type="InterPro" id="IPR009068">
    <property type="entry name" value="uS15_NS1_RNA-bd_sf"/>
</dbReference>
<dbReference type="InterPro" id="IPR000738">
    <property type="entry name" value="WHEP-TRS_dom"/>
</dbReference>
<dbReference type="NCBIfam" id="TIGR00389">
    <property type="entry name" value="glyS_dimeric"/>
    <property type="match status" value="1"/>
</dbReference>
<dbReference type="NCBIfam" id="NF003211">
    <property type="entry name" value="PRK04173.1"/>
    <property type="match status" value="1"/>
</dbReference>
<dbReference type="PANTHER" id="PTHR10745:SF0">
    <property type="entry name" value="GLYCINE--TRNA LIGASE"/>
    <property type="match status" value="1"/>
</dbReference>
<dbReference type="PANTHER" id="PTHR10745">
    <property type="entry name" value="GLYCYL-TRNA SYNTHETASE/DNA POLYMERASE SUBUNIT GAMMA-2"/>
    <property type="match status" value="1"/>
</dbReference>
<dbReference type="Pfam" id="PF03129">
    <property type="entry name" value="HGTP_anticodon"/>
    <property type="match status" value="1"/>
</dbReference>
<dbReference type="Pfam" id="PF00587">
    <property type="entry name" value="tRNA-synt_2b"/>
    <property type="match status" value="1"/>
</dbReference>
<dbReference type="Pfam" id="PF00458">
    <property type="entry name" value="WHEP-TRS"/>
    <property type="match status" value="1"/>
</dbReference>
<dbReference type="PRINTS" id="PR01043">
    <property type="entry name" value="TRNASYNTHGLY"/>
</dbReference>
<dbReference type="SMART" id="SM00991">
    <property type="entry name" value="WHEP-TRS"/>
    <property type="match status" value="1"/>
</dbReference>
<dbReference type="SUPFAM" id="SSF52954">
    <property type="entry name" value="Class II aaRS ABD-related"/>
    <property type="match status" value="1"/>
</dbReference>
<dbReference type="SUPFAM" id="SSF55681">
    <property type="entry name" value="Class II aaRS and biotin synthetases"/>
    <property type="match status" value="1"/>
</dbReference>
<dbReference type="SUPFAM" id="SSF47060">
    <property type="entry name" value="S15/NS1 RNA-binding domain"/>
    <property type="match status" value="1"/>
</dbReference>
<dbReference type="PROSITE" id="PS50862">
    <property type="entry name" value="AA_TRNA_LIGASE_II"/>
    <property type="match status" value="1"/>
</dbReference>
<dbReference type="PROSITE" id="PS00762">
    <property type="entry name" value="WHEP_TRS_1"/>
    <property type="match status" value="1"/>
</dbReference>
<dbReference type="PROSITE" id="PS51185">
    <property type="entry name" value="WHEP_TRS_2"/>
    <property type="match status" value="1"/>
</dbReference>
<organism>
    <name type="scientific">Caenorhabditis elegans</name>
    <dbReference type="NCBI Taxonomy" id="6239"/>
    <lineage>
        <taxon>Eukaryota</taxon>
        <taxon>Metazoa</taxon>
        <taxon>Ecdysozoa</taxon>
        <taxon>Nematoda</taxon>
        <taxon>Chromadorea</taxon>
        <taxon>Rhabditida</taxon>
        <taxon>Rhabditina</taxon>
        <taxon>Rhabditomorpha</taxon>
        <taxon>Rhabditoidea</taxon>
        <taxon>Rhabditidae</taxon>
        <taxon>Peloderinae</taxon>
        <taxon>Caenorhabditis</taxon>
    </lineage>
</organism>
<feature type="chain" id="PRO_0000073002" description="Glycine--tRNA ligase">
    <location>
        <begin position="1"/>
        <end position="742"/>
    </location>
</feature>
<feature type="domain" description="WHEP-TRS" evidence="3">
    <location>
        <begin position="73"/>
        <end position="129"/>
    </location>
</feature>
<feature type="binding site" evidence="1">
    <location>
        <position position="309"/>
    </location>
    <ligand>
        <name>glycine</name>
        <dbReference type="ChEBI" id="CHEBI:57305"/>
    </ligand>
</feature>
<feature type="binding site" evidence="1">
    <location>
        <begin position="341"/>
        <end position="343"/>
    </location>
    <ligand>
        <name>ATP</name>
        <dbReference type="ChEBI" id="CHEBI:30616"/>
    </ligand>
</feature>
<feature type="binding site" evidence="1">
    <location>
        <begin position="352"/>
        <end position="353"/>
    </location>
    <ligand>
        <name>ATP</name>
        <dbReference type="ChEBI" id="CHEBI:30616"/>
    </ligand>
</feature>
<feature type="binding site" evidence="1">
    <location>
        <position position="360"/>
    </location>
    <ligand>
        <name>glycine</name>
        <dbReference type="ChEBI" id="CHEBI:57305"/>
    </ligand>
</feature>
<feature type="binding site" evidence="1">
    <location>
        <begin position="467"/>
        <end position="468"/>
    </location>
    <ligand>
        <name>ATP</name>
        <dbReference type="ChEBI" id="CHEBI:30616"/>
    </ligand>
</feature>
<feature type="binding site" evidence="1">
    <location>
        <begin position="586"/>
        <end position="588"/>
    </location>
    <ligand>
        <name>glycine</name>
        <dbReference type="ChEBI" id="CHEBI:57305"/>
    </ligand>
</feature>
<feature type="binding site" evidence="1">
    <location>
        <position position="593"/>
    </location>
    <ligand>
        <name>ATP</name>
        <dbReference type="ChEBI" id="CHEBI:30616"/>
    </ligand>
</feature>
<accession>Q10039</accession>
<sequence length="742" mass="84150">MFSSCWLKSSVRYSRLIRQFSSENSFFKVELVPSDRKTPLQPRKVVAPRFEKKTRQKISDYLKQMATPEIEAKLAPLRAAVKEYGDLIRDLKAKGAPKIDIDKAVVELKARKRLLEDTEIALAPKEASFDRLKLEDLLKRRFFYDQSFAIYGGVTGLYDFGPMGCSLKANMLQEWRKHFILEEGMLEVDCTSLTPEPVLKASGHVDRFADWMVKDMKNGECFRADHLIKNSIEKLLNDKKTSAAVKQDGQDVLARLEGFDNKDMHEVITRFNFKSPITGNDLTEPIAFNLMFPTQIGPTGDFKAFLRPETAQGIFVNFKRLLEFNQGKLPFAAAQIGLGFRNEISPRQGLIRVREFTMCEIEHFVDPEDKSLAKFAKVADQKLVLFSACNQLDGAPAQEVAIGEAVAKKTVANETLGYYMARCHQFLMKVGIDGRRLRFRQHLSNEMAHYAQDCWDAEILTSYGWIECVGNADRACYDLQQHYKATNVKLVAEKKLPEPVDVNFVEAQANMALLGKSFKKDAKKIQTSLQQLTSEQVSALEEELLAKKLYNLSVDGQNYALTPEHLNIKKYTKKIHVQEITPSVIEPSYGIGRIMYALLEHSFRQREGDEQRTFLAFKPLVAPIKCSVLPISANDTLIPVMDAVKEELSRFEMSYKVDDSSGTIGRRYARTDEIGIPFGITVDFDSLKTTPFTVTIRHAETMSQIRLEVSELGRLISDLVAGRQQWSDAQAKYPKFEASATE</sequence>
<protein>
    <recommendedName>
        <fullName>Glycine--tRNA ligase</fullName>
        <ecNumber evidence="1">6.1.1.14</ecNumber>
    </recommendedName>
    <alternativeName>
        <fullName>Diadenosine tetraphosphate synthetase</fullName>
        <shortName>Ap4A synthetase</shortName>
        <ecNumber evidence="1">2.7.7.-</ecNumber>
    </alternativeName>
    <alternativeName>
        <fullName>Glycyl-tRNA synthetase</fullName>
        <shortName>GlyRS</shortName>
    </alternativeName>
</protein>
<name>GARS_CAEEL</name>
<gene>
    <name evidence="5 7" type="primary">gars-1</name>
    <name evidence="7" type="synonym">grs-1</name>
    <name evidence="7" type="ORF">T10F2.1</name>
</gene>
<comment type="function">
    <text evidence="1">Catalyzes the ATP-dependent ligation of glycine to the 3'-end of its cognate tRNA, via the formation of an aminoacyl-adenylate intermediate (Gly-AMP). Also produces diadenosine tetraphosphate (Ap4A), a universal pleiotropic signaling molecule needed for cell regulation pathways, by direct condensation of 2 ATPs. Thereby, may play a special role in Ap4A homeostasis.</text>
</comment>
<comment type="catalytic activity">
    <reaction evidence="1">
        <text>tRNA(Gly) + glycine + ATP = glycyl-tRNA(Gly) + AMP + diphosphate</text>
        <dbReference type="Rhea" id="RHEA:16013"/>
        <dbReference type="Rhea" id="RHEA-COMP:9664"/>
        <dbReference type="Rhea" id="RHEA-COMP:9683"/>
        <dbReference type="ChEBI" id="CHEBI:30616"/>
        <dbReference type="ChEBI" id="CHEBI:33019"/>
        <dbReference type="ChEBI" id="CHEBI:57305"/>
        <dbReference type="ChEBI" id="CHEBI:78442"/>
        <dbReference type="ChEBI" id="CHEBI:78522"/>
        <dbReference type="ChEBI" id="CHEBI:456215"/>
        <dbReference type="EC" id="6.1.1.14"/>
    </reaction>
    <physiologicalReaction direction="left-to-right" evidence="1">
        <dbReference type="Rhea" id="RHEA:16014"/>
    </physiologicalReaction>
</comment>
<comment type="catalytic activity">
    <reaction evidence="1">
        <text>2 ATP + H(+) = P(1),P(4)-bis(5'-adenosyl) tetraphosphate + diphosphate</text>
        <dbReference type="Rhea" id="RHEA:34935"/>
        <dbReference type="ChEBI" id="CHEBI:15378"/>
        <dbReference type="ChEBI" id="CHEBI:30616"/>
        <dbReference type="ChEBI" id="CHEBI:33019"/>
        <dbReference type="ChEBI" id="CHEBI:58141"/>
    </reaction>
    <physiologicalReaction direction="left-to-right" evidence="1">
        <dbReference type="Rhea" id="RHEA:34936"/>
    </physiologicalReaction>
</comment>
<comment type="subunit">
    <text evidence="1">Homodimer.</text>
</comment>
<comment type="subcellular location">
    <subcellularLocation>
        <location evidence="1">Cytoplasm</location>
    </subcellularLocation>
    <subcellularLocation>
        <location evidence="1">Cell projection</location>
        <location evidence="1">Axon</location>
    </subcellularLocation>
    <subcellularLocation>
        <location evidence="2">Secreted</location>
    </subcellularLocation>
    <subcellularLocation>
        <location evidence="2">Secreted</location>
        <location evidence="2">Extracellular exosome</location>
    </subcellularLocation>
    <text evidence="2">Secreted by motor neuron, possibly through the exosome pathway.</text>
</comment>
<comment type="disruption phenotype">
    <text evidence="4">RNAi-mediated knockdown results in larval lethality. RNAi-mediated knockdown in the germline results in 100% sterility at 25 degrees Celsius.</text>
</comment>
<comment type="similarity">
    <text evidence="6">Belongs to the class-II aminoacyl-tRNA synthetase family.</text>
</comment>